<accession>Q83QJ8</accession>
<accession>Q7C0G2</accession>
<feature type="chain" id="PRO_0000333765" description="3-phenylpropionate-dihydrodiol/cinnamic acid-dihydrodiol dehydrogenase">
    <location>
        <begin position="1"/>
        <end position="270"/>
    </location>
</feature>
<feature type="active site" description="Proton acceptor" evidence="1">
    <location>
        <position position="156"/>
    </location>
</feature>
<feature type="binding site" evidence="1">
    <location>
        <begin position="10"/>
        <end position="34"/>
    </location>
    <ligand>
        <name>NAD(+)</name>
        <dbReference type="ChEBI" id="CHEBI:57540"/>
    </ligand>
</feature>
<feature type="binding site" evidence="1">
    <location>
        <position position="143"/>
    </location>
    <ligand>
        <name>substrate</name>
    </ligand>
</feature>
<organism>
    <name type="scientific">Shigella flexneri</name>
    <dbReference type="NCBI Taxonomy" id="623"/>
    <lineage>
        <taxon>Bacteria</taxon>
        <taxon>Pseudomonadati</taxon>
        <taxon>Pseudomonadota</taxon>
        <taxon>Gammaproteobacteria</taxon>
        <taxon>Enterobacterales</taxon>
        <taxon>Enterobacteriaceae</taxon>
        <taxon>Shigella</taxon>
    </lineage>
</organism>
<reference key="1">
    <citation type="journal article" date="2002" name="Nucleic Acids Res.">
        <title>Genome sequence of Shigella flexneri 2a: insights into pathogenicity through comparison with genomes of Escherichia coli K12 and O157.</title>
        <authorList>
            <person name="Jin Q."/>
            <person name="Yuan Z."/>
            <person name="Xu J."/>
            <person name="Wang Y."/>
            <person name="Shen Y."/>
            <person name="Lu W."/>
            <person name="Wang J."/>
            <person name="Liu H."/>
            <person name="Yang J."/>
            <person name="Yang F."/>
            <person name="Zhang X."/>
            <person name="Zhang J."/>
            <person name="Yang G."/>
            <person name="Wu H."/>
            <person name="Qu D."/>
            <person name="Dong J."/>
            <person name="Sun L."/>
            <person name="Xue Y."/>
            <person name="Zhao A."/>
            <person name="Gao Y."/>
            <person name="Zhu J."/>
            <person name="Kan B."/>
            <person name="Ding K."/>
            <person name="Chen S."/>
            <person name="Cheng H."/>
            <person name="Yao Z."/>
            <person name="He B."/>
            <person name="Chen R."/>
            <person name="Ma D."/>
            <person name="Qiang B."/>
            <person name="Wen Y."/>
            <person name="Hou Y."/>
            <person name="Yu J."/>
        </authorList>
    </citation>
    <scope>NUCLEOTIDE SEQUENCE [LARGE SCALE GENOMIC DNA]</scope>
    <source>
        <strain>301 / Serotype 2a</strain>
    </source>
</reference>
<reference key="2">
    <citation type="journal article" date="2003" name="Infect. Immun.">
        <title>Complete genome sequence and comparative genomics of Shigella flexneri serotype 2a strain 2457T.</title>
        <authorList>
            <person name="Wei J."/>
            <person name="Goldberg M.B."/>
            <person name="Burland V."/>
            <person name="Venkatesan M.M."/>
            <person name="Deng W."/>
            <person name="Fournier G."/>
            <person name="Mayhew G.F."/>
            <person name="Plunkett G. III"/>
            <person name="Rose D.J."/>
            <person name="Darling A."/>
            <person name="Mau B."/>
            <person name="Perna N.T."/>
            <person name="Payne S.M."/>
            <person name="Runyen-Janecky L.J."/>
            <person name="Zhou S."/>
            <person name="Schwartz D.C."/>
            <person name="Blattner F.R."/>
        </authorList>
    </citation>
    <scope>NUCLEOTIDE SEQUENCE [LARGE SCALE GENOMIC DNA]</scope>
    <source>
        <strain>ATCC 700930 / 2457T / Serotype 2a</strain>
    </source>
</reference>
<comment type="function">
    <text evidence="1">Converts 3-phenylpropionate-dihydrodiol (PP-dihydrodiol) and cinnamic acid-dihydrodiol (CI-dihydrodiol) into 3-(2,3-dihydroxylphenyl)propanoic acid (DHPP) and 2,3-dihydroxicinnamic acid (DHCI), respectively.</text>
</comment>
<comment type="catalytic activity">
    <reaction evidence="1">
        <text>3-(cis-5,6-dihydroxycyclohexa-1,3-dien-1-yl)propanoate + NAD(+) = 3-(2,3-dihydroxyphenyl)propanoate + NADH + H(+)</text>
        <dbReference type="Rhea" id="RHEA:25062"/>
        <dbReference type="ChEBI" id="CHEBI:15378"/>
        <dbReference type="ChEBI" id="CHEBI:46951"/>
        <dbReference type="ChEBI" id="CHEBI:57540"/>
        <dbReference type="ChEBI" id="CHEBI:57945"/>
        <dbReference type="ChEBI" id="CHEBI:60087"/>
        <dbReference type="EC" id="1.3.1.87"/>
    </reaction>
</comment>
<comment type="catalytic activity">
    <reaction evidence="1">
        <text>(2E)-3-(cis-5,6-dihydroxycyclohexa-1,3-dien-1-yl)prop-2-enoate + NAD(+) = (2E)-3-(2,3-dihydroxyphenyl)prop-2-enoate + NADH + H(+)</text>
        <dbReference type="Rhea" id="RHEA:25066"/>
        <dbReference type="ChEBI" id="CHEBI:15378"/>
        <dbReference type="ChEBI" id="CHEBI:57540"/>
        <dbReference type="ChEBI" id="CHEBI:57945"/>
        <dbReference type="ChEBI" id="CHEBI:58642"/>
        <dbReference type="ChEBI" id="CHEBI:61451"/>
        <dbReference type="EC" id="1.3.1.87"/>
    </reaction>
</comment>
<comment type="pathway">
    <text evidence="1">Aromatic compound metabolism; 3-phenylpropanoate degradation.</text>
</comment>
<comment type="similarity">
    <text evidence="1">Belongs to the short-chain dehydrogenases/reductases (SDR) family.</text>
</comment>
<sequence length="270" mass="28500">MSDLHNESIFITGGGSGLGLALVERFIEEGAQVATLELSAAKVASLRQRFGEHILAVEGNVTCYADYQRAVDQILTRSGKLDCFIGNAGIWDHNASLVNTPAETLETGFHELFNVNVLGYLLGAKACAPALIASEGSMIFTLSNAAWYPGGGGPLYTTSKHAATGLIRQLAYELAPKVRVNGVGPCGMASDLRGPQALGQSETSIMQSLTPEKIAAILPLQFFPQPADFTGPYVMLASRRNNRALSGVMINADAGLAIRGIRHVAAGLDL</sequence>
<evidence type="ECO:0000255" key="1">
    <source>
        <dbReference type="HAMAP-Rule" id="MF_01647"/>
    </source>
</evidence>
<name>HCAB_SHIFL</name>
<keyword id="KW-0058">Aromatic hydrocarbons catabolism</keyword>
<keyword id="KW-0520">NAD</keyword>
<keyword id="KW-0560">Oxidoreductase</keyword>
<keyword id="KW-1185">Reference proteome</keyword>
<gene>
    <name evidence="1" type="primary">hcaB</name>
    <name type="ordered locus">SF2588</name>
    <name type="ordered locus">S2760</name>
</gene>
<protein>
    <recommendedName>
        <fullName evidence="1">3-phenylpropionate-dihydrodiol/cinnamic acid-dihydrodiol dehydrogenase</fullName>
        <ecNumber evidence="1">1.3.1.87</ecNumber>
    </recommendedName>
    <alternativeName>
        <fullName evidence="1">2,3-dihydroxy-2,3-dihydrophenylpropionate dehydrogenase</fullName>
    </alternativeName>
    <alternativeName>
        <fullName evidence="1">3-(cis-5,6-dihydroxycyclohexa-1,3-dien-1-yl)propanoate dehydrogenase</fullName>
    </alternativeName>
    <alternativeName>
        <fullName evidence="1">CI-dihydrodiol dehydrogenase</fullName>
    </alternativeName>
    <alternativeName>
        <fullName evidence="1">Cis-3-(2-carboxyethenyl)-3,5-cyclohexadiene-1,2-diol dehydrogenase</fullName>
    </alternativeName>
    <alternativeName>
        <fullName evidence="1">Cis-3-(2-carboxyethyl)-3,5-cyclohexadiene-1,2-diol dehydrogenase</fullName>
    </alternativeName>
    <alternativeName>
        <fullName evidence="1">PP-dihydrodiol dehydrogenase</fullName>
    </alternativeName>
</protein>
<dbReference type="EC" id="1.3.1.87" evidence="1"/>
<dbReference type="EMBL" id="AE005674">
    <property type="protein sequence ID" value="AAN44087.1"/>
    <property type="molecule type" value="Genomic_DNA"/>
</dbReference>
<dbReference type="EMBL" id="AE014073">
    <property type="protein sequence ID" value="AAP17912.1"/>
    <property type="molecule type" value="Genomic_DNA"/>
</dbReference>
<dbReference type="RefSeq" id="NP_708380.1">
    <property type="nucleotide sequence ID" value="NC_004337.2"/>
</dbReference>
<dbReference type="RefSeq" id="WP_001281382.1">
    <property type="nucleotide sequence ID" value="NZ_WPGW01000021.1"/>
</dbReference>
<dbReference type="SMR" id="Q83QJ8"/>
<dbReference type="STRING" id="198214.SF2588"/>
<dbReference type="PaxDb" id="198214-SF2588"/>
<dbReference type="GeneID" id="1026784"/>
<dbReference type="KEGG" id="sfl:SF2588"/>
<dbReference type="KEGG" id="sfx:S2760"/>
<dbReference type="PATRIC" id="fig|198214.7.peg.3088"/>
<dbReference type="HOGENOM" id="CLU_010194_1_0_6"/>
<dbReference type="UniPathway" id="UPA00714"/>
<dbReference type="Proteomes" id="UP000001006">
    <property type="component" value="Chromosome"/>
</dbReference>
<dbReference type="Proteomes" id="UP000002673">
    <property type="component" value="Chromosome"/>
</dbReference>
<dbReference type="GO" id="GO:0018498">
    <property type="term" value="F:2,3-dihydroxy-2,3-dihydro-phenylpropionate dehydrogenase activity"/>
    <property type="evidence" value="ECO:0007669"/>
    <property type="project" value="UniProtKB-UniRule"/>
</dbReference>
<dbReference type="GO" id="GO:0019380">
    <property type="term" value="P:3-phenylpropionate catabolic process"/>
    <property type="evidence" value="ECO:0007669"/>
    <property type="project" value="UniProtKB-UniRule"/>
</dbReference>
<dbReference type="CDD" id="cd05348">
    <property type="entry name" value="BphB-like_SDR_c"/>
    <property type="match status" value="1"/>
</dbReference>
<dbReference type="FunFam" id="3.40.50.720:FF:000151">
    <property type="entry name" value="3-phenylpropionate-dihydrodiol/cinnamic acid-dihydrodiol dehydrogenase"/>
    <property type="match status" value="1"/>
</dbReference>
<dbReference type="Gene3D" id="3.40.50.720">
    <property type="entry name" value="NAD(P)-binding Rossmann-like Domain"/>
    <property type="match status" value="1"/>
</dbReference>
<dbReference type="HAMAP" id="MF_01647">
    <property type="entry name" value="HcaB"/>
    <property type="match status" value="1"/>
</dbReference>
<dbReference type="InterPro" id="IPR047950">
    <property type="entry name" value="BphB-like_SDR"/>
</dbReference>
<dbReference type="InterPro" id="IPR023643">
    <property type="entry name" value="Dihydrodiol_DH_HcaB"/>
</dbReference>
<dbReference type="InterPro" id="IPR036291">
    <property type="entry name" value="NAD(P)-bd_dom_sf"/>
</dbReference>
<dbReference type="InterPro" id="IPR020904">
    <property type="entry name" value="Sc_DH/Rdtase_CS"/>
</dbReference>
<dbReference type="InterPro" id="IPR002347">
    <property type="entry name" value="SDR_fam"/>
</dbReference>
<dbReference type="NCBIfam" id="NF042950">
    <property type="entry name" value="3PPDhyd_Dh_HcaB"/>
    <property type="match status" value="1"/>
</dbReference>
<dbReference type="NCBIfam" id="NF004849">
    <property type="entry name" value="PRK06200.1"/>
    <property type="match status" value="1"/>
</dbReference>
<dbReference type="PANTHER" id="PTHR43943:SF17">
    <property type="entry name" value="3-PHENYLPROPIONATE-DIHYDRODIOL_CINNAMIC ACID-DIHYDRODIOL DEHYDROGENASE"/>
    <property type="match status" value="1"/>
</dbReference>
<dbReference type="PANTHER" id="PTHR43943">
    <property type="entry name" value="DEHYDROGENASE/REDUCTASE (SDR FAMILY) MEMBER 4"/>
    <property type="match status" value="1"/>
</dbReference>
<dbReference type="Pfam" id="PF00106">
    <property type="entry name" value="adh_short"/>
    <property type="match status" value="1"/>
</dbReference>
<dbReference type="PRINTS" id="PR00081">
    <property type="entry name" value="GDHRDH"/>
</dbReference>
<dbReference type="SUPFAM" id="SSF51735">
    <property type="entry name" value="NAD(P)-binding Rossmann-fold domains"/>
    <property type="match status" value="1"/>
</dbReference>
<dbReference type="PROSITE" id="PS00061">
    <property type="entry name" value="ADH_SHORT"/>
    <property type="match status" value="1"/>
</dbReference>
<proteinExistence type="inferred from homology"/>